<feature type="transit peptide" description="Chloroplast" evidence="4">
    <location>
        <begin position="1"/>
        <end position="74"/>
    </location>
</feature>
<feature type="chain" id="PRO_0000420278" description="Enoyl-[acyl-carrier-protein] reductase [NADH], chloroplastic">
    <location>
        <begin position="75"/>
        <end position="390"/>
    </location>
</feature>
<feature type="active site" description="Proton donor" evidence="3">
    <location>
        <position position="239"/>
    </location>
</feature>
<feature type="active site" description="Lowers pKa of active site Tyr" evidence="3">
    <location>
        <position position="282"/>
    </location>
</feature>
<feature type="binding site" evidence="2">
    <location>
        <position position="53"/>
    </location>
    <ligand>
        <name>NADP(+)</name>
        <dbReference type="ChEBI" id="CHEBI:58349"/>
    </ligand>
</feature>
<feature type="binding site" evidence="3">
    <location>
        <position position="170"/>
    </location>
    <ligand>
        <name>NADP(+)</name>
        <dbReference type="ChEBI" id="CHEBI:58349"/>
    </ligand>
</feature>
<feature type="binding site" evidence="3">
    <location>
        <position position="282"/>
    </location>
    <ligand>
        <name>NADP(+)</name>
        <dbReference type="ChEBI" id="CHEBI:58349"/>
    </ligand>
</feature>
<feature type="binding site" evidence="2">
    <location>
        <position position="314"/>
    </location>
    <ligand>
        <name>NADP(+)</name>
        <dbReference type="ChEBI" id="CHEBI:58349"/>
    </ligand>
</feature>
<feature type="mutagenesis site" description="Loss of activity." evidence="6">
    <original>T</original>
    <variation>I</variation>
    <location>
        <position position="226"/>
    </location>
</feature>
<feature type="sequence conflict" description="In Ref. 1; CAA74175." evidence="8" ref="1">
    <original>I</original>
    <variation>V</variation>
    <location>
        <position position="24"/>
    </location>
</feature>
<feature type="sequence conflict" description="In Ref. 1; CAA74175." evidence="8" ref="1">
    <original>N</original>
    <variation>Y</variation>
    <location>
        <position position="35"/>
    </location>
</feature>
<feature type="sequence conflict" description="In Ref. 1; CAA74175." evidence="8" ref="1">
    <original>HS</original>
    <variation>NT</variation>
    <location>
        <begin position="59"/>
        <end position="60"/>
    </location>
</feature>
<feature type="sequence conflict" description="In Ref. 1; CAA74175." evidence="8" ref="1">
    <original>A</original>
    <variation>V</variation>
    <location>
        <position position="234"/>
    </location>
</feature>
<feature type="sequence conflict" description="In Ref. 1; AAF37208." evidence="8" ref="1">
    <original>V</original>
    <variation>R</variation>
    <location>
        <position position="376"/>
    </location>
</feature>
<sequence>MAATAASSLQIATRRPSMSSPSKILKAGTYIVGANPGNASWDKLSCTRQLSNLGCLRNHSAVPTCKRPFSFSTRAMSESSENKAPSGLPIDLRGKRAFIAGIADDNGYGWAIAKSLAAAGAEILVGTWVPALNIFETSLRRGKFDQSRVLPDGSLMEIKKVYALDAVFDNPEDVPEDVKTNKRYAGSSNWTVQEAAECVKKDFGSIDILVHSLANGPEVSKPLLETSRKGYLAAISASSYSFVSLLRHFLPIMNPGGASISLTYIASERIIPGYGGGMSSAKAALESDTRVLAYEAGRKSNIRVNTISAGPLGSRAAKAIGFIDTMIEYSYNNGPIQKTLTADEVGNAAAFLASPLASAITGATIYVDNGLNAMGVALDSPVFKDLNSKN</sequence>
<proteinExistence type="evidence at protein level"/>
<evidence type="ECO:0000250" key="1"/>
<evidence type="ECO:0000250" key="2">
    <source>
        <dbReference type="UniProtKB" id="L0E2Z4"/>
    </source>
</evidence>
<evidence type="ECO:0000250" key="3">
    <source>
        <dbReference type="UniProtKB" id="O93868"/>
    </source>
</evidence>
<evidence type="ECO:0000255" key="4"/>
<evidence type="ECO:0000269" key="5">
    <source>
    </source>
</evidence>
<evidence type="ECO:0000269" key="6">
    <source>
    </source>
</evidence>
<evidence type="ECO:0000269" key="7">
    <source>
    </source>
</evidence>
<evidence type="ECO:0000305" key="8"/>
<comment type="function">
    <text evidence="6 7">Catalyzes the NAD-dependent reduction of a carbon-carbon double bond in an enoyl moiety that is covalently linked to an acyl carrier protein (ACP). Catalyzes the last reduction step in the de novo synthesis cycle of fatty acids. Involved in the elongation cycle of fatty acids which are used in lipid metabolism. Required for normal plant growth.</text>
</comment>
<comment type="catalytic activity">
    <reaction>
        <text>a 2,3-saturated acyl-[ACP] + NAD(+) = a (2E)-enoyl-[ACP] + NADH + H(+)</text>
        <dbReference type="Rhea" id="RHEA:10240"/>
        <dbReference type="Rhea" id="RHEA-COMP:9925"/>
        <dbReference type="Rhea" id="RHEA-COMP:9926"/>
        <dbReference type="ChEBI" id="CHEBI:15378"/>
        <dbReference type="ChEBI" id="CHEBI:57540"/>
        <dbReference type="ChEBI" id="CHEBI:57945"/>
        <dbReference type="ChEBI" id="CHEBI:78784"/>
        <dbReference type="ChEBI" id="CHEBI:78785"/>
        <dbReference type="EC" id="1.3.1.9"/>
    </reaction>
</comment>
<comment type="activity regulation">
    <text evidence="7">Inhibited by the phytotoxin cyperin and the synthetic antimicrobial compound triclosan.</text>
</comment>
<comment type="biophysicochemical properties">
    <kinetics>
        <KM evidence="7">288 uM for crotonyl-CoA</KM>
    </kinetics>
</comment>
<comment type="pathway">
    <text>Lipid metabolism; fatty acid biosynthesis.</text>
</comment>
<comment type="subunit">
    <text evidence="1">Homotetramer.</text>
</comment>
<comment type="subcellular location">
    <subcellularLocation>
        <location evidence="8">Plastid</location>
        <location evidence="8">Chloroplast</location>
    </subcellularLocation>
</comment>
<comment type="tissue specificity">
    <text evidence="5 6">Expressed in flowers and siliques and at lower levels in roots and leaves (at protein level).</text>
</comment>
<comment type="disruption phenotype">
    <text evidence="6">Premature cell death in several organs, chlorotic and curly leaves, semidwarfism, distorted siliques, premature senescence of primary inflorescences, reduced fertility and decrease in total lipid content.</text>
</comment>
<comment type="similarity">
    <text evidence="8">Belongs to the short-chain dehydrogenases/reductases (SDR) family. FabI subfamily.</text>
</comment>
<comment type="sequence caution" evidence="8">
    <conflict type="frameshift">
        <sequence resource="EMBL-CDS" id="AAG40070"/>
    </conflict>
</comment>
<gene>
    <name type="primary">MOD1</name>
    <name type="synonym">ENR-A</name>
    <name type="synonym">ENR1</name>
    <name type="ordered locus">At2g05990</name>
    <name type="ORF">T6P5.19</name>
</gene>
<keyword id="KW-0150">Chloroplast</keyword>
<keyword id="KW-0275">Fatty acid biosynthesis</keyword>
<keyword id="KW-0276">Fatty acid metabolism</keyword>
<keyword id="KW-0444">Lipid biosynthesis</keyword>
<keyword id="KW-0443">Lipid metabolism</keyword>
<keyword id="KW-0521">NADP</keyword>
<keyword id="KW-0560">Oxidoreductase</keyword>
<keyword id="KW-0934">Plastid</keyword>
<keyword id="KW-1185">Reference proteome</keyword>
<keyword id="KW-0809">Transit peptide</keyword>
<organism>
    <name type="scientific">Arabidopsis thaliana</name>
    <name type="common">Mouse-ear cress</name>
    <dbReference type="NCBI Taxonomy" id="3702"/>
    <lineage>
        <taxon>Eukaryota</taxon>
        <taxon>Viridiplantae</taxon>
        <taxon>Streptophyta</taxon>
        <taxon>Embryophyta</taxon>
        <taxon>Tracheophyta</taxon>
        <taxon>Spermatophyta</taxon>
        <taxon>Magnoliopsida</taxon>
        <taxon>eudicotyledons</taxon>
        <taxon>Gunneridae</taxon>
        <taxon>Pentapetalae</taxon>
        <taxon>rosids</taxon>
        <taxon>malvids</taxon>
        <taxon>Brassicales</taxon>
        <taxon>Brassicaceae</taxon>
        <taxon>Camelineae</taxon>
        <taxon>Arabidopsis</taxon>
    </lineage>
</organism>
<dbReference type="EC" id="1.3.1.9"/>
<dbReference type="EMBL" id="Y13860">
    <property type="protein sequence ID" value="CAA74175.1"/>
    <property type="molecule type" value="Genomic_DNA"/>
</dbReference>
<dbReference type="EMBL" id="AF207593">
    <property type="protein sequence ID" value="AAF37208.1"/>
    <property type="molecule type" value="mRNA"/>
</dbReference>
<dbReference type="EMBL" id="AC005970">
    <property type="protein sequence ID" value="AAC95176.1"/>
    <property type="molecule type" value="Genomic_DNA"/>
</dbReference>
<dbReference type="EMBL" id="CP002685">
    <property type="protein sequence ID" value="AEC05988.1"/>
    <property type="molecule type" value="Genomic_DNA"/>
</dbReference>
<dbReference type="EMBL" id="CP002685">
    <property type="protein sequence ID" value="AEC05989.1"/>
    <property type="molecule type" value="Genomic_DNA"/>
</dbReference>
<dbReference type="EMBL" id="AF324719">
    <property type="protein sequence ID" value="AAG40070.1"/>
    <property type="status" value="ALT_FRAME"/>
    <property type="molecule type" value="mRNA"/>
</dbReference>
<dbReference type="EMBL" id="AY056192">
    <property type="protein sequence ID" value="AAL07041.1"/>
    <property type="molecule type" value="mRNA"/>
</dbReference>
<dbReference type="EMBL" id="AY113962">
    <property type="protein sequence ID" value="AAM45010.1"/>
    <property type="molecule type" value="mRNA"/>
</dbReference>
<dbReference type="PIR" id="H84473">
    <property type="entry name" value="H84473"/>
</dbReference>
<dbReference type="RefSeq" id="NP_565331.1">
    <property type="nucleotide sequence ID" value="NM_126612.3"/>
</dbReference>
<dbReference type="RefSeq" id="NP_849940.1">
    <property type="nucleotide sequence ID" value="NM_179609.1"/>
</dbReference>
<dbReference type="SMR" id="Q9SLA8"/>
<dbReference type="BioGRID" id="551">
    <property type="interactions" value="10"/>
</dbReference>
<dbReference type="FunCoup" id="Q9SLA8">
    <property type="interactions" value="821"/>
</dbReference>
<dbReference type="IntAct" id="Q9SLA8">
    <property type="interactions" value="1"/>
</dbReference>
<dbReference type="STRING" id="3702.Q9SLA8"/>
<dbReference type="iPTMnet" id="Q9SLA8"/>
<dbReference type="PaxDb" id="3702-AT2G05990.2"/>
<dbReference type="ProMEX" id="Q9SLA8"/>
<dbReference type="ProteomicsDB" id="231007"/>
<dbReference type="EnsemblPlants" id="AT2G05990.1">
    <property type="protein sequence ID" value="AT2G05990.1"/>
    <property type="gene ID" value="AT2G05990"/>
</dbReference>
<dbReference type="EnsemblPlants" id="AT2G05990.2">
    <property type="protein sequence ID" value="AT2G05990.2"/>
    <property type="gene ID" value="AT2G05990"/>
</dbReference>
<dbReference type="GeneID" id="815152"/>
<dbReference type="Gramene" id="AT2G05990.1">
    <property type="protein sequence ID" value="AT2G05990.1"/>
    <property type="gene ID" value="AT2G05990"/>
</dbReference>
<dbReference type="Gramene" id="AT2G05990.2">
    <property type="protein sequence ID" value="AT2G05990.2"/>
    <property type="gene ID" value="AT2G05990"/>
</dbReference>
<dbReference type="KEGG" id="ath:AT2G05990"/>
<dbReference type="Araport" id="AT2G05990"/>
<dbReference type="TAIR" id="AT2G05990">
    <property type="gene designation" value="MOD1"/>
</dbReference>
<dbReference type="eggNOG" id="KOG0725">
    <property type="taxonomic scope" value="Eukaryota"/>
</dbReference>
<dbReference type="HOGENOM" id="CLU_010194_10_0_1"/>
<dbReference type="InParanoid" id="Q9SLA8"/>
<dbReference type="OMA" id="DWMGPAK"/>
<dbReference type="PhylomeDB" id="Q9SLA8"/>
<dbReference type="BioCyc" id="ARA:AT2G05990-MONOMER"/>
<dbReference type="SABIO-RK" id="Q9SLA8"/>
<dbReference type="UniPathway" id="UPA00094"/>
<dbReference type="PRO" id="PR:Q9SLA8"/>
<dbReference type="Proteomes" id="UP000006548">
    <property type="component" value="Chromosome 2"/>
</dbReference>
<dbReference type="ExpressionAtlas" id="Q9SLA8">
    <property type="expression patterns" value="baseline and differential"/>
</dbReference>
<dbReference type="GO" id="GO:0009507">
    <property type="term" value="C:chloroplast"/>
    <property type="evidence" value="ECO:0000314"/>
    <property type="project" value="TAIR"/>
</dbReference>
<dbReference type="GO" id="GO:0009941">
    <property type="term" value="C:chloroplast envelope"/>
    <property type="evidence" value="ECO:0007005"/>
    <property type="project" value="TAIR"/>
</dbReference>
<dbReference type="GO" id="GO:0009570">
    <property type="term" value="C:chloroplast stroma"/>
    <property type="evidence" value="ECO:0007005"/>
    <property type="project" value="TAIR"/>
</dbReference>
<dbReference type="GO" id="GO:0005835">
    <property type="term" value="C:fatty acid synthase complex"/>
    <property type="evidence" value="ECO:0000304"/>
    <property type="project" value="TAIR"/>
</dbReference>
<dbReference type="GO" id="GO:0005739">
    <property type="term" value="C:mitochondrion"/>
    <property type="evidence" value="ECO:0000314"/>
    <property type="project" value="TAIR"/>
</dbReference>
<dbReference type="GO" id="GO:0009579">
    <property type="term" value="C:thylakoid"/>
    <property type="evidence" value="ECO:0007005"/>
    <property type="project" value="TAIR"/>
</dbReference>
<dbReference type="GO" id="GO:0005507">
    <property type="term" value="F:copper ion binding"/>
    <property type="evidence" value="ECO:0007005"/>
    <property type="project" value="TAIR"/>
</dbReference>
<dbReference type="GO" id="GO:0004318">
    <property type="term" value="F:enoyl-[acyl-carrier-protein] reductase (NADH) activity"/>
    <property type="evidence" value="ECO:0000316"/>
    <property type="project" value="TAIR"/>
</dbReference>
<dbReference type="GO" id="GO:0016631">
    <property type="term" value="F:enoyl-[acyl-carrier-protein] reductase activity (NAD(P)H)"/>
    <property type="evidence" value="ECO:0000315"/>
    <property type="project" value="TAIR"/>
</dbReference>
<dbReference type="GO" id="GO:0006633">
    <property type="term" value="P:fatty acid biosynthetic process"/>
    <property type="evidence" value="ECO:0000315"/>
    <property type="project" value="TAIR"/>
</dbReference>
<dbReference type="CDD" id="cd05372">
    <property type="entry name" value="ENR_SDR"/>
    <property type="match status" value="1"/>
</dbReference>
<dbReference type="FunFam" id="1.10.8.400:FF:000001">
    <property type="entry name" value="Enoyl-[acyl-carrier-protein] reductase [NADH]"/>
    <property type="match status" value="1"/>
</dbReference>
<dbReference type="FunFam" id="3.40.50.720:FF:000192">
    <property type="entry name" value="Enoyl-[acyl-carrier-protein] reductase [NADH]"/>
    <property type="match status" value="1"/>
</dbReference>
<dbReference type="Gene3D" id="1.10.8.400">
    <property type="entry name" value="Enoyl acyl carrier protein reductase"/>
    <property type="match status" value="1"/>
</dbReference>
<dbReference type="Gene3D" id="3.40.50.720">
    <property type="entry name" value="NAD(P)-binding Rossmann-like Domain"/>
    <property type="match status" value="1"/>
</dbReference>
<dbReference type="InterPro" id="IPR014358">
    <property type="entry name" value="Enoyl-ACP_Rdtase_NADH"/>
</dbReference>
<dbReference type="InterPro" id="IPR036291">
    <property type="entry name" value="NAD(P)-bd_dom_sf"/>
</dbReference>
<dbReference type="InterPro" id="IPR002347">
    <property type="entry name" value="SDR_fam"/>
</dbReference>
<dbReference type="NCBIfam" id="NF004957">
    <property type="entry name" value="PRK06300.1"/>
    <property type="match status" value="1"/>
</dbReference>
<dbReference type="PANTHER" id="PTHR43159">
    <property type="entry name" value="ENOYL-[ACYL-CARRIER-PROTEIN] REDUCTASE"/>
    <property type="match status" value="1"/>
</dbReference>
<dbReference type="PANTHER" id="PTHR43159:SF2">
    <property type="entry name" value="ENOYL-[ACYL-CARRIER-PROTEIN] REDUCTASE [NADH], CHLOROPLASTIC"/>
    <property type="match status" value="1"/>
</dbReference>
<dbReference type="Pfam" id="PF13561">
    <property type="entry name" value="adh_short_C2"/>
    <property type="match status" value="1"/>
</dbReference>
<dbReference type="PRINTS" id="PR00081">
    <property type="entry name" value="GDHRDH"/>
</dbReference>
<dbReference type="SUPFAM" id="SSF51735">
    <property type="entry name" value="NAD(P)-binding Rossmann-fold domains"/>
    <property type="match status" value="1"/>
</dbReference>
<name>FABI_ARATH</name>
<protein>
    <recommendedName>
        <fullName>Enoyl-[acyl-carrier-protein] reductase [NADH], chloroplastic</fullName>
        <shortName>ENR</shortName>
        <ecNumber>1.3.1.9</ecNumber>
    </recommendedName>
    <alternativeName>
        <fullName>NADH-dependent enoyl-ACP reductase 1</fullName>
    </alternativeName>
    <alternativeName>
        <fullName>Protein MOSAIC DEATH 1</fullName>
    </alternativeName>
</protein>
<reference key="1">
    <citation type="journal article" date="1999" name="Plant Mol. Biol.">
        <title>Sequences surrounding the transcription initiation site of the Arabidopsis enoyl-acyl carrier protein reductase gene control seed expression in transgenic tobacco.</title>
        <authorList>
            <person name="de Boer G.J."/>
            <person name="Testerink C."/>
            <person name="Pielage G."/>
            <person name="Nijkamp H.J."/>
            <person name="Stuitje A.R."/>
        </authorList>
    </citation>
    <scope>NUCLEOTIDE SEQUENCE [GENOMIC DNA]</scope>
    <scope>TISSUE SPECIFICITY</scope>
    <source>
        <strain>cv. Landsberg erecta</strain>
    </source>
</reference>
<reference key="2">
    <citation type="journal article" date="2000" name="Plant Cell">
        <title>Deficiency in fatty acid synthase leads to premature cell death and dramatic alterations in plant morphology.</title>
        <authorList>
            <person name="Mou Z."/>
            <person name="He Y."/>
            <person name="Dai Y."/>
            <person name="Liu X."/>
            <person name="Li J."/>
        </authorList>
    </citation>
    <scope>NUCLEOTIDE SEQUENCE [MRNA]</scope>
    <scope>FUNCTION</scope>
    <scope>TISSUE SPECIFICITY</scope>
    <scope>DISRUPTION PHENOTYPE</scope>
    <scope>MUTAGENESIS OF THR-226</scope>
    <source>
        <strain>cv. Columbia</strain>
    </source>
</reference>
<reference key="3">
    <citation type="journal article" date="1999" name="Nature">
        <title>Sequence and analysis of chromosome 2 of the plant Arabidopsis thaliana.</title>
        <authorList>
            <person name="Lin X."/>
            <person name="Kaul S."/>
            <person name="Rounsley S.D."/>
            <person name="Shea T.P."/>
            <person name="Benito M.-I."/>
            <person name="Town C.D."/>
            <person name="Fujii C.Y."/>
            <person name="Mason T.M."/>
            <person name="Bowman C.L."/>
            <person name="Barnstead M.E."/>
            <person name="Feldblyum T.V."/>
            <person name="Buell C.R."/>
            <person name="Ketchum K.A."/>
            <person name="Lee J.J."/>
            <person name="Ronning C.M."/>
            <person name="Koo H.L."/>
            <person name="Moffat K.S."/>
            <person name="Cronin L.A."/>
            <person name="Shen M."/>
            <person name="Pai G."/>
            <person name="Van Aken S."/>
            <person name="Umayam L."/>
            <person name="Tallon L.J."/>
            <person name="Gill J.E."/>
            <person name="Adams M.D."/>
            <person name="Carrera A.J."/>
            <person name="Creasy T.H."/>
            <person name="Goodman H.M."/>
            <person name="Somerville C.R."/>
            <person name="Copenhaver G.P."/>
            <person name="Preuss D."/>
            <person name="Nierman W.C."/>
            <person name="White O."/>
            <person name="Eisen J.A."/>
            <person name="Salzberg S.L."/>
            <person name="Fraser C.M."/>
            <person name="Venter J.C."/>
        </authorList>
    </citation>
    <scope>NUCLEOTIDE SEQUENCE [LARGE SCALE GENOMIC DNA]</scope>
    <source>
        <strain>cv. Columbia</strain>
    </source>
</reference>
<reference key="4">
    <citation type="journal article" date="2017" name="Plant J.">
        <title>Araport11: a complete reannotation of the Arabidopsis thaliana reference genome.</title>
        <authorList>
            <person name="Cheng C.Y."/>
            <person name="Krishnakumar V."/>
            <person name="Chan A.P."/>
            <person name="Thibaud-Nissen F."/>
            <person name="Schobel S."/>
            <person name="Town C.D."/>
        </authorList>
    </citation>
    <scope>GENOME REANNOTATION</scope>
    <source>
        <strain>cv. Columbia</strain>
    </source>
</reference>
<reference key="5">
    <citation type="journal article" date="2003" name="Science">
        <title>Empirical analysis of transcriptional activity in the Arabidopsis genome.</title>
        <authorList>
            <person name="Yamada K."/>
            <person name="Lim J."/>
            <person name="Dale J.M."/>
            <person name="Chen H."/>
            <person name="Shinn P."/>
            <person name="Palm C.J."/>
            <person name="Southwick A.M."/>
            <person name="Wu H.C."/>
            <person name="Kim C.J."/>
            <person name="Nguyen M."/>
            <person name="Pham P.K."/>
            <person name="Cheuk R.F."/>
            <person name="Karlin-Newmann G."/>
            <person name="Liu S.X."/>
            <person name="Lam B."/>
            <person name="Sakano H."/>
            <person name="Wu T."/>
            <person name="Yu G."/>
            <person name="Miranda M."/>
            <person name="Quach H.L."/>
            <person name="Tripp M."/>
            <person name="Chang C.H."/>
            <person name="Lee J.M."/>
            <person name="Toriumi M.J."/>
            <person name="Chan M.M."/>
            <person name="Tang C.C."/>
            <person name="Onodera C.S."/>
            <person name="Deng J.M."/>
            <person name="Akiyama K."/>
            <person name="Ansari Y."/>
            <person name="Arakawa T."/>
            <person name="Banh J."/>
            <person name="Banno F."/>
            <person name="Bowser L."/>
            <person name="Brooks S.Y."/>
            <person name="Carninci P."/>
            <person name="Chao Q."/>
            <person name="Choy N."/>
            <person name="Enju A."/>
            <person name="Goldsmith A.D."/>
            <person name="Gurjal M."/>
            <person name="Hansen N.F."/>
            <person name="Hayashizaki Y."/>
            <person name="Johnson-Hopson C."/>
            <person name="Hsuan V.W."/>
            <person name="Iida K."/>
            <person name="Karnes M."/>
            <person name="Khan S."/>
            <person name="Koesema E."/>
            <person name="Ishida J."/>
            <person name="Jiang P.X."/>
            <person name="Jones T."/>
            <person name="Kawai J."/>
            <person name="Kamiya A."/>
            <person name="Meyers C."/>
            <person name="Nakajima M."/>
            <person name="Narusaka M."/>
            <person name="Seki M."/>
            <person name="Sakurai T."/>
            <person name="Satou M."/>
            <person name="Tamse R."/>
            <person name="Vaysberg M."/>
            <person name="Wallender E.K."/>
            <person name="Wong C."/>
            <person name="Yamamura Y."/>
            <person name="Yuan S."/>
            <person name="Shinozaki K."/>
            <person name="Davis R.W."/>
            <person name="Theologis A."/>
            <person name="Ecker J.R."/>
        </authorList>
    </citation>
    <scope>NUCLEOTIDE SEQUENCE [LARGE SCALE MRNA]</scope>
    <source>
        <strain>cv. Columbia</strain>
    </source>
</reference>
<reference key="6">
    <citation type="journal article" date="2008" name="Plant Physiol.">
        <title>A pathogenic fungi diphenyl ether phytotoxin targets plant enoyl (acyl carrier protein) reductase.</title>
        <authorList>
            <person name="Dayan F.E."/>
            <person name="Ferreira D."/>
            <person name="Wang Y.H."/>
            <person name="Khan I.A."/>
            <person name="McInroy J.A."/>
            <person name="Pan Z."/>
        </authorList>
    </citation>
    <scope>FUNCTION</scope>
    <scope>ACTIVITY REGULATION</scope>
    <scope>BIOPHYSICOCHEMICAL PROPERTIES</scope>
</reference>
<accession>Q9SLA8</accession>
<accession>O04942</accession>
<accession>Q9FEF2</accession>
<accession>Q9M672</accession>